<protein>
    <recommendedName>
        <fullName>Bifunctional ribose 1,5-bisphosphokinase-thymidine phosphorylase</fullName>
    </recommendedName>
    <domain>
        <recommendedName>
            <fullName>Ribose 1,5-bisphosphate phosphokinase PhnN</fullName>
            <ecNumber>2.7.4.23</ecNumber>
        </recommendedName>
        <alternativeName>
            <fullName>Ribose 1,5-bisphosphokinase</fullName>
        </alternativeName>
    </domain>
    <domain>
        <recommendedName>
            <fullName>Putative thymidine phosphorylase</fullName>
            <ecNumber>2.4.2.4</ecNumber>
        </recommendedName>
        <alternativeName>
            <fullName>TdRPase</fullName>
        </alternativeName>
    </domain>
</protein>
<organism>
    <name type="scientific">Azorhizobium caulinodans (strain ATCC 43989 / DSM 5975 / JCM 20966 / LMG 6465 / NBRC 14845 / NCIMB 13405 / ORS 571)</name>
    <dbReference type="NCBI Taxonomy" id="438753"/>
    <lineage>
        <taxon>Bacteria</taxon>
        <taxon>Pseudomonadati</taxon>
        <taxon>Pseudomonadota</taxon>
        <taxon>Alphaproteobacteria</taxon>
        <taxon>Hyphomicrobiales</taxon>
        <taxon>Xanthobacteraceae</taxon>
        <taxon>Azorhizobium</taxon>
    </lineage>
</organism>
<feature type="chain" id="PRO_0000314696" description="Bifunctional ribose 1,5-bisphosphokinase-thymidine phosphorylase">
    <location>
        <begin position="1"/>
        <end position="693"/>
    </location>
</feature>
<feature type="region of interest" description="Ribose 1,5-bisphosphokinase">
    <location>
        <begin position="1"/>
        <end position="193"/>
    </location>
</feature>
<feature type="region of interest" description="Thymidinephosphorylase">
    <location>
        <begin position="194"/>
        <end position="693"/>
    </location>
</feature>
<feature type="binding site" evidence="1">
    <location>
        <begin position="14"/>
        <end position="21"/>
    </location>
    <ligand>
        <name>ATP</name>
        <dbReference type="ChEBI" id="CHEBI:30616"/>
    </ligand>
</feature>
<accession>A8IA58</accession>
<reference key="1">
    <citation type="submission" date="2007-04" db="EMBL/GenBank/DDBJ databases">
        <title>Complete genome sequence of the nitrogen-fixing bacterium Azorhizobium caulinodans ORS571.</title>
        <authorList>
            <person name="Lee K.B."/>
            <person name="Backer P.D."/>
            <person name="Aono T."/>
            <person name="Liu C.T."/>
            <person name="Suzuki S."/>
            <person name="Suzuki T."/>
            <person name="Kaneko T."/>
            <person name="Yamada M."/>
            <person name="Tabata S."/>
            <person name="Kupfer D.M."/>
            <person name="Najar F.Z."/>
            <person name="Wiley G.B."/>
            <person name="Roe B."/>
            <person name="Binnewies T."/>
            <person name="Ussery D."/>
            <person name="Vereecke D."/>
            <person name="Gevers D."/>
            <person name="Holsters M."/>
            <person name="Oyaizu H."/>
        </authorList>
    </citation>
    <scope>NUCLEOTIDE SEQUENCE [LARGE SCALE GENOMIC DNA]</scope>
    <source>
        <strain>ATCC 43989 / DSM 5975 / JCM 20966 / LMG 6465 / NBRC 14845 / NCIMB 13405 / ORS 571</strain>
    </source>
</reference>
<dbReference type="EC" id="2.7.4.23"/>
<dbReference type="EC" id="2.4.2.4"/>
<dbReference type="EMBL" id="AP009384">
    <property type="protein sequence ID" value="BAF88465.1"/>
    <property type="molecule type" value="Genomic_DNA"/>
</dbReference>
<dbReference type="SMR" id="A8IA58"/>
<dbReference type="STRING" id="438753.AZC_2467"/>
<dbReference type="KEGG" id="azc:AZC_2467"/>
<dbReference type="eggNOG" id="COG0213">
    <property type="taxonomic scope" value="Bacteria"/>
</dbReference>
<dbReference type="eggNOG" id="COG3709">
    <property type="taxonomic scope" value="Bacteria"/>
</dbReference>
<dbReference type="HOGENOM" id="CLU_025040_6_0_5"/>
<dbReference type="UniPathway" id="UPA00087">
    <property type="reaction ID" value="UER00175"/>
</dbReference>
<dbReference type="Proteomes" id="UP000000270">
    <property type="component" value="Chromosome"/>
</dbReference>
<dbReference type="GO" id="GO:0005829">
    <property type="term" value="C:cytosol"/>
    <property type="evidence" value="ECO:0007669"/>
    <property type="project" value="TreeGrafter"/>
</dbReference>
<dbReference type="GO" id="GO:0004645">
    <property type="term" value="F:1,4-alpha-oligoglucan phosphorylase activity"/>
    <property type="evidence" value="ECO:0007669"/>
    <property type="project" value="InterPro"/>
</dbReference>
<dbReference type="GO" id="GO:0005524">
    <property type="term" value="F:ATP binding"/>
    <property type="evidence" value="ECO:0007669"/>
    <property type="project" value="UniProtKB-KW"/>
</dbReference>
<dbReference type="GO" id="GO:0033863">
    <property type="term" value="F:ribose 1,5-bisphosphate phosphokinase activity"/>
    <property type="evidence" value="ECO:0007669"/>
    <property type="project" value="UniProtKB-UniRule"/>
</dbReference>
<dbReference type="GO" id="GO:0009032">
    <property type="term" value="F:thymidine phosphorylase activity"/>
    <property type="evidence" value="ECO:0007669"/>
    <property type="project" value="UniProtKB-UniRule"/>
</dbReference>
<dbReference type="GO" id="GO:0006015">
    <property type="term" value="P:5-phosphoribose 1-diphosphate biosynthetic process"/>
    <property type="evidence" value="ECO:0007669"/>
    <property type="project" value="UniProtKB-UniRule"/>
</dbReference>
<dbReference type="GO" id="GO:0019634">
    <property type="term" value="P:organic phosphonate metabolic process"/>
    <property type="evidence" value="ECO:0007669"/>
    <property type="project" value="UniProtKB-UniRule"/>
</dbReference>
<dbReference type="GO" id="GO:0015716">
    <property type="term" value="P:organic phosphonate transport"/>
    <property type="evidence" value="ECO:0007669"/>
    <property type="project" value="UniProtKB-KW"/>
</dbReference>
<dbReference type="GO" id="GO:0006206">
    <property type="term" value="P:pyrimidine nucleobase metabolic process"/>
    <property type="evidence" value="ECO:0007669"/>
    <property type="project" value="InterPro"/>
</dbReference>
<dbReference type="GO" id="GO:0006213">
    <property type="term" value="P:pyrimidine nucleoside metabolic process"/>
    <property type="evidence" value="ECO:0007669"/>
    <property type="project" value="InterPro"/>
</dbReference>
<dbReference type="Gene3D" id="1.20.970.50">
    <property type="match status" value="1"/>
</dbReference>
<dbReference type="Gene3D" id="3.40.1030.10">
    <property type="entry name" value="Nucleoside phosphorylase/phosphoribosyltransferase catalytic domain"/>
    <property type="match status" value="1"/>
</dbReference>
<dbReference type="Gene3D" id="3.40.50.300">
    <property type="entry name" value="P-loop containing nucleotide triphosphate hydrolases"/>
    <property type="match status" value="1"/>
</dbReference>
<dbReference type="Gene3D" id="3.90.1170.30">
    <property type="entry name" value="Pyrimidine nucleoside phosphorylase-like, C-terminal domain"/>
    <property type="match status" value="1"/>
</dbReference>
<dbReference type="HAMAP" id="MF_00836">
    <property type="entry name" value="PhnN"/>
    <property type="match status" value="1"/>
</dbReference>
<dbReference type="HAMAP" id="MF_00703">
    <property type="entry name" value="Thymid_phosp_2"/>
    <property type="match status" value="1"/>
</dbReference>
<dbReference type="InterPro" id="IPR008145">
    <property type="entry name" value="GK/Ca_channel_bsu"/>
</dbReference>
<dbReference type="InterPro" id="IPR000312">
    <property type="entry name" value="Glycosyl_Trfase_fam3"/>
</dbReference>
<dbReference type="InterPro" id="IPR017459">
    <property type="entry name" value="Glycosyl_Trfase_fam3_N_dom"/>
</dbReference>
<dbReference type="InterPro" id="IPR036320">
    <property type="entry name" value="Glycosyl_Trfase_fam3_N_dom_sf"/>
</dbReference>
<dbReference type="InterPro" id="IPR035902">
    <property type="entry name" value="Nuc_phospho_transferase"/>
</dbReference>
<dbReference type="InterPro" id="IPR027417">
    <property type="entry name" value="P-loop_NTPase"/>
</dbReference>
<dbReference type="InterPro" id="IPR012699">
    <property type="entry name" value="PhnN"/>
</dbReference>
<dbReference type="InterPro" id="IPR036566">
    <property type="entry name" value="PYNP-like_C_sf"/>
</dbReference>
<dbReference type="InterPro" id="IPR013102">
    <property type="entry name" value="PYNP_C"/>
</dbReference>
<dbReference type="InterPro" id="IPR017872">
    <property type="entry name" value="Pyrmidine_PPase_CS"/>
</dbReference>
<dbReference type="InterPro" id="IPR028579">
    <property type="entry name" value="Thym_Pase_Put"/>
</dbReference>
<dbReference type="InterPro" id="IPR013466">
    <property type="entry name" value="Thymidine/AMP_Pase"/>
</dbReference>
<dbReference type="InterPro" id="IPR000053">
    <property type="entry name" value="Thymidine/pyrmidine_PPase"/>
</dbReference>
<dbReference type="NCBIfam" id="TIGR02645">
    <property type="entry name" value="ARCH_P_rylase"/>
    <property type="match status" value="1"/>
</dbReference>
<dbReference type="NCBIfam" id="TIGR02322">
    <property type="entry name" value="phosphon_PhnN"/>
    <property type="match status" value="1"/>
</dbReference>
<dbReference type="NCBIfam" id="NF003338">
    <property type="entry name" value="PRK04350.1"/>
    <property type="match status" value="1"/>
</dbReference>
<dbReference type="PANTHER" id="PTHR10515">
    <property type="entry name" value="THYMIDINE PHOSPHORYLASE"/>
    <property type="match status" value="1"/>
</dbReference>
<dbReference type="PANTHER" id="PTHR10515:SF0">
    <property type="entry name" value="THYMIDINE PHOSPHORYLASE"/>
    <property type="match status" value="1"/>
</dbReference>
<dbReference type="Pfam" id="PF02885">
    <property type="entry name" value="Glycos_trans_3N"/>
    <property type="match status" value="1"/>
</dbReference>
<dbReference type="Pfam" id="PF00591">
    <property type="entry name" value="Glycos_transf_3"/>
    <property type="match status" value="1"/>
</dbReference>
<dbReference type="Pfam" id="PF07831">
    <property type="entry name" value="PYNP_C"/>
    <property type="match status" value="1"/>
</dbReference>
<dbReference type="SMART" id="SM00072">
    <property type="entry name" value="GuKc"/>
    <property type="match status" value="1"/>
</dbReference>
<dbReference type="SMART" id="SM00941">
    <property type="entry name" value="PYNP_C"/>
    <property type="match status" value="1"/>
</dbReference>
<dbReference type="SUPFAM" id="SSF52418">
    <property type="entry name" value="Nucleoside phosphorylase/phosphoribosyltransferase catalytic domain"/>
    <property type="match status" value="1"/>
</dbReference>
<dbReference type="SUPFAM" id="SSF47648">
    <property type="entry name" value="Nucleoside phosphorylase/phosphoribosyltransferase N-terminal domain"/>
    <property type="match status" value="1"/>
</dbReference>
<dbReference type="SUPFAM" id="SSF52540">
    <property type="entry name" value="P-loop containing nucleoside triphosphate hydrolases"/>
    <property type="match status" value="1"/>
</dbReference>
<dbReference type="SUPFAM" id="SSF54680">
    <property type="entry name" value="Pyrimidine nucleoside phosphorylase C-terminal domain"/>
    <property type="match status" value="1"/>
</dbReference>
<dbReference type="PROSITE" id="PS00647">
    <property type="entry name" value="THYMID_PHOSPHORYLASE"/>
    <property type="match status" value="1"/>
</dbReference>
<evidence type="ECO:0000250" key="1"/>
<evidence type="ECO:0000305" key="2"/>
<comment type="function">
    <text evidence="1">Catalyzes the phosphorylation of ribose 1,5-bisphosphate to 5-phospho-D-ribosyl alpha-1-diphosphate (PRPP).</text>
</comment>
<comment type="catalytic activity">
    <reaction>
        <text>alpha-D-ribose 1,5-bisphosphate + ATP = 5-phospho-alpha-D-ribose 1-diphosphate + ADP</text>
        <dbReference type="Rhea" id="RHEA:20109"/>
        <dbReference type="ChEBI" id="CHEBI:30616"/>
        <dbReference type="ChEBI" id="CHEBI:58017"/>
        <dbReference type="ChEBI" id="CHEBI:68688"/>
        <dbReference type="ChEBI" id="CHEBI:456216"/>
        <dbReference type="EC" id="2.7.4.23"/>
    </reaction>
</comment>
<comment type="catalytic activity">
    <reaction>
        <text>thymidine + phosphate = 2-deoxy-alpha-D-ribose 1-phosphate + thymine</text>
        <dbReference type="Rhea" id="RHEA:16037"/>
        <dbReference type="ChEBI" id="CHEBI:17748"/>
        <dbReference type="ChEBI" id="CHEBI:17821"/>
        <dbReference type="ChEBI" id="CHEBI:43474"/>
        <dbReference type="ChEBI" id="CHEBI:57259"/>
        <dbReference type="EC" id="2.4.2.4"/>
    </reaction>
</comment>
<comment type="pathway">
    <text>Metabolic intermediate biosynthesis; 5-phospho-alpha-D-ribose 1-diphosphate biosynthesis; 5-phospho-alpha-D-ribose 1-diphosphate from D-ribose 5-phosphate (route II): step 3/3.</text>
</comment>
<comment type="similarity">
    <text evidence="2">In the N-terminal section; belongs to the ribose 1,5-bisphosphokinase family.</text>
</comment>
<comment type="similarity">
    <text evidence="2">In the C-terminal section; belongs to the thymidine/pyrimidine-nucleoside phosphorylase family. Type 2 subfamily.</text>
</comment>
<name>RBKTP_AZOC5</name>
<gene>
    <name type="primary">phnN</name>
    <name type="ordered locus">AZC_2467</name>
</gene>
<proteinExistence type="inferred from homology"/>
<sequence length="693" mass="72760">MSVMGSGLFFFVVGPSGSGKDTLIEGAKAALGPTGRYVFARRAITRPADAGGEAHEALSVDQFDAVLAQGGFLIHWEAHGLKYGLRATLLDDMAAGRHVIANGSRAMVAALAERVPHLVVVEITAPEAVLAERLKGRGREGAENIAARLERKVPPFPESVTVIQVPNDSTPRAGIEKFVAALVAQTARLRLVRMAIETGRRNVAFLARGNTVVAAPDYLGPGRVDLIGEGRSIRAEVALVGDALLPSDAVGLSSEAFGALGLPEGAELVLTRTPVPESRAALRRKIQGATLDEGAYAQVVGDIVEGRYPDSEVAGFLVAADRSLSDDEVLALAKVRAKFASRITWDEPMVVDKHSMGGIPGSRITMIVVPIVAAHGLAIPKTSSRAITSAAGTADAMETLARVDLDSAEVRRTVERARGCIAWNGRLSHSALDDVMNAITRPLGLDSTRWSVASILSKKLAAGSTHVVIDLPFGARARVKGAGEAHEMARLFEQVGAGLGLTVEAIPTDGSAPIGRGIGPALEVRDVLWVLEDHSEAPPDLKEKALFFASRILAWDPAVGPDRARARAEELLASGAARAALERIVEAQGRWSEPVRPARLTHTVTAQNDGQVSDIDGFAVAGIARLAGAPLDKGAGIDLKARVGDVVRAGDPLFVIHASTAADLEAAAGAALAFDGYGIMMDGKAFRRINPER</sequence>
<keyword id="KW-0019">Alkylphosphonate uptake</keyword>
<keyword id="KW-0067">ATP-binding</keyword>
<keyword id="KW-0328">Glycosyltransferase</keyword>
<keyword id="KW-0511">Multifunctional enzyme</keyword>
<keyword id="KW-0547">Nucleotide-binding</keyword>
<keyword id="KW-1185">Reference proteome</keyword>
<keyword id="KW-0808">Transferase</keyword>